<sequence>MSSRRSSRGSISEEEINELISKLQSLLPNSRRRGSSQASTTKLLKETCNYIKSLHREVDDLSDRLSDLMATMDHNSPGAEIIRSILRS</sequence>
<gene>
    <name type="primary">ILI5</name>
    <name type="synonym">BHLH170</name>
    <name type="synonym">PGL2</name>
    <name type="ORF">OsI_08935</name>
</gene>
<organism>
    <name type="scientific">Oryza sativa subsp. indica</name>
    <name type="common">Rice</name>
    <dbReference type="NCBI Taxonomy" id="39946"/>
    <lineage>
        <taxon>Eukaryota</taxon>
        <taxon>Viridiplantae</taxon>
        <taxon>Streptophyta</taxon>
        <taxon>Embryophyta</taxon>
        <taxon>Tracheophyta</taxon>
        <taxon>Spermatophyta</taxon>
        <taxon>Magnoliopsida</taxon>
        <taxon>Liliopsida</taxon>
        <taxon>Poales</taxon>
        <taxon>Poaceae</taxon>
        <taxon>BOP clade</taxon>
        <taxon>Oryzoideae</taxon>
        <taxon>Oryzeae</taxon>
        <taxon>Oryzinae</taxon>
        <taxon>Oryza</taxon>
        <taxon>Oryza sativa</taxon>
    </lineage>
</organism>
<accession>A2X9L8</accession>
<keyword id="KW-0341">Growth regulation</keyword>
<keyword id="KW-0539">Nucleus</keyword>
<keyword id="KW-1185">Reference proteome</keyword>
<keyword id="KW-0804">Transcription</keyword>
<keyword id="KW-0805">Transcription regulation</keyword>
<comment type="function">
    <text evidence="1">Atypical and probable non DNA-binding bHLH transcription factor that acts as a positive regulator of grain size. Binds the transcription repressor APG and forms a heterodimer of antagonistic basic helix-loop-helix transcription factors that regulates grain length and weight by controlling cell elongation in lemma and palea (By similarity).</text>
</comment>
<comment type="subunit">
    <text evidence="1">Interacts with APG.</text>
</comment>
<comment type="subcellular location">
    <subcellularLocation>
        <location evidence="2">Nucleus</location>
    </subcellularLocation>
</comment>
<comment type="similarity">
    <text>Belongs to the bHLH protein family.</text>
</comment>
<evidence type="ECO:0000250" key="1"/>
<evidence type="ECO:0000255" key="2">
    <source>
        <dbReference type="PROSITE-ProRule" id="PRU00981"/>
    </source>
</evidence>
<dbReference type="EMBL" id="CM000127">
    <property type="protein sequence ID" value="EAY87528.1"/>
    <property type="molecule type" value="Genomic_DNA"/>
</dbReference>
<dbReference type="SMR" id="A2X9L8"/>
<dbReference type="STRING" id="39946.A2X9L8"/>
<dbReference type="EnsemblPlants" id="BGIOSGA005623-TA">
    <property type="protein sequence ID" value="BGIOSGA005623-PA"/>
    <property type="gene ID" value="BGIOSGA005623"/>
</dbReference>
<dbReference type="EnsemblPlants" id="OsGoSa_02g0033540.01">
    <property type="protein sequence ID" value="OsGoSa_02g0033540.01"/>
    <property type="gene ID" value="OsGoSa_02g0033540"/>
</dbReference>
<dbReference type="EnsemblPlants" id="OsIR64_02g0033140.01">
    <property type="protein sequence ID" value="OsIR64_02g0033140.01"/>
    <property type="gene ID" value="OsIR64_02g0033140"/>
</dbReference>
<dbReference type="EnsemblPlants" id="OsKYG_02g0033210.01">
    <property type="protein sequence ID" value="OsKYG_02g0033210.01"/>
    <property type="gene ID" value="OsKYG_02g0033210"/>
</dbReference>
<dbReference type="EnsemblPlants" id="OsLaMu_02g0033020.01">
    <property type="protein sequence ID" value="OsLaMu_02g0033020.01"/>
    <property type="gene ID" value="OsLaMu_02g0033020"/>
</dbReference>
<dbReference type="EnsemblPlants" id="OsLima_02g0033400.01">
    <property type="protein sequence ID" value="OsLima_02g0033400.01"/>
    <property type="gene ID" value="OsLima_02g0033400"/>
</dbReference>
<dbReference type="EnsemblPlants" id="OsLiXu_02g0033420.01">
    <property type="protein sequence ID" value="OsLiXu_02g0033420.01"/>
    <property type="gene ID" value="OsLiXu_02g0033420"/>
</dbReference>
<dbReference type="EnsemblPlants" id="OsMH63_02G033830_01">
    <property type="protein sequence ID" value="OsMH63_02G033830_01"/>
    <property type="gene ID" value="OsMH63_02G033830"/>
</dbReference>
<dbReference type="EnsemblPlants" id="OsPr106_02g0033320.01">
    <property type="protein sequence ID" value="OsPr106_02g0033320.01"/>
    <property type="gene ID" value="OsPr106_02g0033320"/>
</dbReference>
<dbReference type="EnsemblPlants" id="OsZS97_02G033100_01">
    <property type="protein sequence ID" value="OsZS97_02G033100_01"/>
    <property type="gene ID" value="OsZS97_02G033100"/>
</dbReference>
<dbReference type="Gramene" id="BGIOSGA005623-TA">
    <property type="protein sequence ID" value="BGIOSGA005623-PA"/>
    <property type="gene ID" value="BGIOSGA005623"/>
</dbReference>
<dbReference type="Gramene" id="OsGoSa_02g0033540.01">
    <property type="protein sequence ID" value="OsGoSa_02g0033540.01"/>
    <property type="gene ID" value="OsGoSa_02g0033540"/>
</dbReference>
<dbReference type="Gramene" id="OsIR64_02g0033140.01">
    <property type="protein sequence ID" value="OsIR64_02g0033140.01"/>
    <property type="gene ID" value="OsIR64_02g0033140"/>
</dbReference>
<dbReference type="Gramene" id="OsKYG_02g0033210.01">
    <property type="protein sequence ID" value="OsKYG_02g0033210.01"/>
    <property type="gene ID" value="OsKYG_02g0033210"/>
</dbReference>
<dbReference type="Gramene" id="OsLaMu_02g0033020.01">
    <property type="protein sequence ID" value="OsLaMu_02g0033020.01"/>
    <property type="gene ID" value="OsLaMu_02g0033020"/>
</dbReference>
<dbReference type="Gramene" id="OsLima_02g0033400.01">
    <property type="protein sequence ID" value="OsLima_02g0033400.01"/>
    <property type="gene ID" value="OsLima_02g0033400"/>
</dbReference>
<dbReference type="Gramene" id="OsLiXu_02g0033420.01">
    <property type="protein sequence ID" value="OsLiXu_02g0033420.01"/>
    <property type="gene ID" value="OsLiXu_02g0033420"/>
</dbReference>
<dbReference type="Gramene" id="OsMH63_02G033830_01">
    <property type="protein sequence ID" value="OsMH63_02G033830_01"/>
    <property type="gene ID" value="OsMH63_02G033830"/>
</dbReference>
<dbReference type="Gramene" id="OsPr106_02g0033320.01">
    <property type="protein sequence ID" value="OsPr106_02g0033320.01"/>
    <property type="gene ID" value="OsPr106_02g0033320"/>
</dbReference>
<dbReference type="Gramene" id="OsZS97_02G033100_01">
    <property type="protein sequence ID" value="OsZS97_02G033100_01"/>
    <property type="gene ID" value="OsZS97_02G033100"/>
</dbReference>
<dbReference type="HOGENOM" id="CLU_183267_0_0_1"/>
<dbReference type="OMA" id="ELMNTMD"/>
<dbReference type="OrthoDB" id="988630at2759"/>
<dbReference type="Proteomes" id="UP000007015">
    <property type="component" value="Chromosome 2"/>
</dbReference>
<dbReference type="GO" id="GO:0005737">
    <property type="term" value="C:cytoplasm"/>
    <property type="evidence" value="ECO:0007669"/>
    <property type="project" value="EnsemblPlants"/>
</dbReference>
<dbReference type="GO" id="GO:0005634">
    <property type="term" value="C:nucleus"/>
    <property type="evidence" value="ECO:0007669"/>
    <property type="project" value="UniProtKB-SubCell"/>
</dbReference>
<dbReference type="GO" id="GO:0042803">
    <property type="term" value="F:protein homodimerization activity"/>
    <property type="evidence" value="ECO:0007669"/>
    <property type="project" value="EnsemblPlants"/>
</dbReference>
<dbReference type="GO" id="GO:0051512">
    <property type="term" value="P:positive regulation of unidimensional cell growth"/>
    <property type="evidence" value="ECO:0007669"/>
    <property type="project" value="EnsemblPlants"/>
</dbReference>
<dbReference type="GO" id="GO:1900457">
    <property type="term" value="P:regulation of brassinosteroid mediated signaling pathway"/>
    <property type="evidence" value="ECO:0007669"/>
    <property type="project" value="EnsemblPlants"/>
</dbReference>
<dbReference type="GO" id="GO:0006355">
    <property type="term" value="P:regulation of DNA-templated transcription"/>
    <property type="evidence" value="ECO:0007669"/>
    <property type="project" value="InterPro"/>
</dbReference>
<dbReference type="GO" id="GO:2000024">
    <property type="term" value="P:regulation of leaf development"/>
    <property type="evidence" value="ECO:0007669"/>
    <property type="project" value="EnsemblPlants"/>
</dbReference>
<dbReference type="GO" id="GO:0080113">
    <property type="term" value="P:regulation of seed growth"/>
    <property type="evidence" value="ECO:0007669"/>
    <property type="project" value="EnsemblPlants"/>
</dbReference>
<dbReference type="GO" id="GO:0009646">
    <property type="term" value="P:response to absence of light"/>
    <property type="evidence" value="ECO:0007669"/>
    <property type="project" value="EnsemblPlants"/>
</dbReference>
<dbReference type="GO" id="GO:0009741">
    <property type="term" value="P:response to brassinosteroid"/>
    <property type="evidence" value="ECO:0007669"/>
    <property type="project" value="EnsemblPlants"/>
</dbReference>
<dbReference type="FunFam" id="4.10.280.10:FF:000106">
    <property type="entry name" value="Transcription factor ILI5"/>
    <property type="match status" value="1"/>
</dbReference>
<dbReference type="Gene3D" id="4.10.280.10">
    <property type="entry name" value="Helix-loop-helix DNA-binding domain"/>
    <property type="match status" value="1"/>
</dbReference>
<dbReference type="InterPro" id="IPR011598">
    <property type="entry name" value="bHLH_dom"/>
</dbReference>
<dbReference type="InterPro" id="IPR036638">
    <property type="entry name" value="HLH_DNA-bd_sf"/>
</dbReference>
<dbReference type="InterPro" id="IPR044293">
    <property type="entry name" value="PRE"/>
</dbReference>
<dbReference type="PANTHER" id="PTHR46446:SF7">
    <property type="entry name" value="TRANSCRIPTION FACTOR ILI5"/>
    <property type="match status" value="1"/>
</dbReference>
<dbReference type="PANTHER" id="PTHR46446">
    <property type="entry name" value="TRANSCRIPTION FACTOR PRE"/>
    <property type="match status" value="1"/>
</dbReference>
<dbReference type="Pfam" id="PF23174">
    <property type="entry name" value="bHLH_ILI"/>
    <property type="match status" value="1"/>
</dbReference>
<dbReference type="SMART" id="SM00353">
    <property type="entry name" value="HLH"/>
    <property type="match status" value="1"/>
</dbReference>
<dbReference type="SUPFAM" id="SSF47459">
    <property type="entry name" value="HLH, helix-loop-helix DNA-binding domain"/>
    <property type="match status" value="1"/>
</dbReference>
<dbReference type="PROSITE" id="PS50888">
    <property type="entry name" value="BHLH"/>
    <property type="match status" value="1"/>
</dbReference>
<feature type="chain" id="PRO_0000429097" description="Transcription factor ILI5">
    <location>
        <begin position="1"/>
        <end position="88"/>
    </location>
</feature>
<feature type="domain" description="bHLH" evidence="2">
    <location>
        <begin position="1"/>
        <end position="54"/>
    </location>
</feature>
<protein>
    <recommendedName>
        <fullName>Transcription factor ILI5</fullName>
    </recommendedName>
    <alternativeName>
        <fullName>Basic helix-loop-helix protein 170</fullName>
    </alternativeName>
    <alternativeName>
        <fullName>Protein INCREASED LEAF INCLINATION 5</fullName>
    </alternativeName>
    <alternativeName>
        <fullName>Protein POSITIVE REGULATOR OF GRAIN LENGTH 2</fullName>
    </alternativeName>
    <alternativeName>
        <fullName>bHLH transcription factor bHLH170</fullName>
    </alternativeName>
</protein>
<name>ILI5_ORYSI</name>
<reference key="1">
    <citation type="journal article" date="2005" name="PLoS Biol.">
        <title>The genomes of Oryza sativa: a history of duplications.</title>
        <authorList>
            <person name="Yu J."/>
            <person name="Wang J."/>
            <person name="Lin W."/>
            <person name="Li S."/>
            <person name="Li H."/>
            <person name="Zhou J."/>
            <person name="Ni P."/>
            <person name="Dong W."/>
            <person name="Hu S."/>
            <person name="Zeng C."/>
            <person name="Zhang J."/>
            <person name="Zhang Y."/>
            <person name="Li R."/>
            <person name="Xu Z."/>
            <person name="Li S."/>
            <person name="Li X."/>
            <person name="Zheng H."/>
            <person name="Cong L."/>
            <person name="Lin L."/>
            <person name="Yin J."/>
            <person name="Geng J."/>
            <person name="Li G."/>
            <person name="Shi J."/>
            <person name="Liu J."/>
            <person name="Lv H."/>
            <person name="Li J."/>
            <person name="Wang J."/>
            <person name="Deng Y."/>
            <person name="Ran L."/>
            <person name="Shi X."/>
            <person name="Wang X."/>
            <person name="Wu Q."/>
            <person name="Li C."/>
            <person name="Ren X."/>
            <person name="Wang J."/>
            <person name="Wang X."/>
            <person name="Li D."/>
            <person name="Liu D."/>
            <person name="Zhang X."/>
            <person name="Ji Z."/>
            <person name="Zhao W."/>
            <person name="Sun Y."/>
            <person name="Zhang Z."/>
            <person name="Bao J."/>
            <person name="Han Y."/>
            <person name="Dong L."/>
            <person name="Ji J."/>
            <person name="Chen P."/>
            <person name="Wu S."/>
            <person name="Liu J."/>
            <person name="Xiao Y."/>
            <person name="Bu D."/>
            <person name="Tan J."/>
            <person name="Yang L."/>
            <person name="Ye C."/>
            <person name="Zhang J."/>
            <person name="Xu J."/>
            <person name="Zhou Y."/>
            <person name="Yu Y."/>
            <person name="Zhang B."/>
            <person name="Zhuang S."/>
            <person name="Wei H."/>
            <person name="Liu B."/>
            <person name="Lei M."/>
            <person name="Yu H."/>
            <person name="Li Y."/>
            <person name="Xu H."/>
            <person name="Wei S."/>
            <person name="He X."/>
            <person name="Fang L."/>
            <person name="Zhang Z."/>
            <person name="Zhang Y."/>
            <person name="Huang X."/>
            <person name="Su Z."/>
            <person name="Tong W."/>
            <person name="Li J."/>
            <person name="Tong Z."/>
            <person name="Li S."/>
            <person name="Ye J."/>
            <person name="Wang L."/>
            <person name="Fang L."/>
            <person name="Lei T."/>
            <person name="Chen C.-S."/>
            <person name="Chen H.-C."/>
            <person name="Xu Z."/>
            <person name="Li H."/>
            <person name="Huang H."/>
            <person name="Zhang F."/>
            <person name="Xu H."/>
            <person name="Li N."/>
            <person name="Zhao C."/>
            <person name="Li S."/>
            <person name="Dong L."/>
            <person name="Huang Y."/>
            <person name="Li L."/>
            <person name="Xi Y."/>
            <person name="Qi Q."/>
            <person name="Li W."/>
            <person name="Zhang B."/>
            <person name="Hu W."/>
            <person name="Zhang Y."/>
            <person name="Tian X."/>
            <person name="Jiao Y."/>
            <person name="Liang X."/>
            <person name="Jin J."/>
            <person name="Gao L."/>
            <person name="Zheng W."/>
            <person name="Hao B."/>
            <person name="Liu S.-M."/>
            <person name="Wang W."/>
            <person name="Yuan L."/>
            <person name="Cao M."/>
            <person name="McDermott J."/>
            <person name="Samudrala R."/>
            <person name="Wang J."/>
            <person name="Wong G.K.-S."/>
            <person name="Yang H."/>
        </authorList>
    </citation>
    <scope>NUCLEOTIDE SEQUENCE [LARGE SCALE GENOMIC DNA]</scope>
    <source>
        <strain>cv. 93-11</strain>
    </source>
</reference>
<proteinExistence type="inferred from homology"/>